<name>APE_ASFWA</name>
<accession>P0C9C7</accession>
<organismHost>
    <name type="scientific">Ornithodoros</name>
    <name type="common">relapsing fever ticks</name>
    <dbReference type="NCBI Taxonomy" id="6937"/>
</organismHost>
<organismHost>
    <name type="scientific">Phacochoerus aethiopicus</name>
    <name type="common">Warthog</name>
    <dbReference type="NCBI Taxonomy" id="85517"/>
</organismHost>
<organismHost>
    <name type="scientific">Phacochoerus africanus</name>
    <name type="common">Warthog</name>
    <dbReference type="NCBI Taxonomy" id="41426"/>
</organismHost>
<organismHost>
    <name type="scientific">Potamochoerus larvatus</name>
    <name type="common">Bushpig</name>
    <dbReference type="NCBI Taxonomy" id="273792"/>
</organismHost>
<organismHost>
    <name type="scientific">Sus scrofa</name>
    <name type="common">Pig</name>
    <dbReference type="NCBI Taxonomy" id="9823"/>
</organismHost>
<sequence>MFGAFVSHRLWSDSGCTTTCITNSIANYVAFGEQIGFPFKSAQVFIAGPRKAVINIQEDDKVELLKMIVKHNLWVVAHGTYLDVPWSRRSAFVTHFIQQELLICKEVGIKGLVLHLGAVEPELIVEGLKKIKPVEGVVIYLETPHNKHHTYKYSTMEQIKELFLRIRNTRLKQIGLCIDTAHIWSSGVNISSYNDAGQWLRSLENIHSVIPPSHIMFHLNDAATECGSGIDRHASLFEGMIWKSYSHKIKKSGLYCFVEYITRHQCPAILERNLGSSMQLQTALTAEFTTLKSLLK</sequence>
<organism>
    <name type="scientific">African swine fever virus (isolate Warthog/Namibia/Wart80/1980)</name>
    <name type="common">ASFV</name>
    <dbReference type="NCBI Taxonomy" id="561444"/>
    <lineage>
        <taxon>Viruses</taxon>
        <taxon>Varidnaviria</taxon>
        <taxon>Bamfordvirae</taxon>
        <taxon>Nucleocytoviricota</taxon>
        <taxon>Pokkesviricetes</taxon>
        <taxon>Asfuvirales</taxon>
        <taxon>Asfarviridae</taxon>
        <taxon>Asfivirus</taxon>
        <taxon>African swine fever virus</taxon>
    </lineage>
</organism>
<proteinExistence type="inferred from homology"/>
<evidence type="ECO:0000250" key="1"/>
<evidence type="ECO:0000250" key="2">
    <source>
        <dbReference type="UniProtKB" id="P0C9C6"/>
    </source>
</evidence>
<evidence type="ECO:0000250" key="3">
    <source>
        <dbReference type="UniProtKB" id="Q65202"/>
    </source>
</evidence>
<evidence type="ECO:0000255" key="4">
    <source>
        <dbReference type="PROSITE-ProRule" id="PRU00763"/>
    </source>
</evidence>
<evidence type="ECO:0000305" key="5"/>
<reference key="1">
    <citation type="submission" date="2003-03" db="EMBL/GenBank/DDBJ databases">
        <title>African swine fever virus genomes.</title>
        <authorList>
            <person name="Kutish G.F."/>
            <person name="Rock D.L."/>
        </authorList>
    </citation>
    <scope>NUCLEOTIDE SEQUENCE [LARGE SCALE GENOMIC DNA]</scope>
</reference>
<feature type="chain" id="PRO_0000373141" description="Probable AP endonuclease">
    <location>
        <begin position="1"/>
        <end position="296"/>
    </location>
</feature>
<feature type="binding site" evidence="4">
    <location>
        <position position="78"/>
    </location>
    <ligand>
        <name>Zn(2+)</name>
        <dbReference type="ChEBI" id="CHEBI:29105"/>
        <label>1</label>
    </ligand>
</feature>
<feature type="binding site" evidence="4">
    <location>
        <position position="115"/>
    </location>
    <ligand>
        <name>Zn(2+)</name>
        <dbReference type="ChEBI" id="CHEBI:29105"/>
        <label>2</label>
    </ligand>
</feature>
<feature type="binding site" evidence="4">
    <location>
        <position position="142"/>
    </location>
    <ligand>
        <name>Zn(2+)</name>
        <dbReference type="ChEBI" id="CHEBI:29105"/>
        <label>2</label>
    </ligand>
</feature>
<feature type="binding site" evidence="4">
    <location>
        <position position="182"/>
    </location>
    <ligand>
        <name>Zn(2+)</name>
        <dbReference type="ChEBI" id="CHEBI:29105"/>
        <label>3</label>
    </ligand>
</feature>
<feature type="binding site" evidence="4">
    <location>
        <position position="218"/>
    </location>
    <ligand>
        <name>Zn(2+)</name>
        <dbReference type="ChEBI" id="CHEBI:29105"/>
        <label>2</label>
    </ligand>
</feature>
<feature type="binding site" evidence="4">
    <location>
        <position position="231"/>
    </location>
    <ligand>
        <name>Zn(2+)</name>
        <dbReference type="ChEBI" id="CHEBI:29105"/>
        <label>3</label>
    </ligand>
</feature>
<feature type="binding site" evidence="4">
    <location>
        <position position="233"/>
    </location>
    <ligand>
        <name>Zn(2+)</name>
        <dbReference type="ChEBI" id="CHEBI:29105"/>
        <label>3</label>
    </ligand>
</feature>
<feature type="binding site" evidence="2">
    <location>
        <position position="271"/>
    </location>
    <ligand>
        <name>Zn(2+)</name>
        <dbReference type="ChEBI" id="CHEBI:29105"/>
        <label>1</label>
    </ligand>
</feature>
<feature type="disulfide bond" evidence="2">
    <location>
        <begin position="16"/>
        <end position="20"/>
    </location>
</feature>
<keyword id="KW-1015">Disulfide bond</keyword>
<keyword id="KW-0227">DNA damage</keyword>
<keyword id="KW-0234">DNA repair</keyword>
<keyword id="KW-0244">Early protein</keyword>
<keyword id="KW-0255">Endonuclease</keyword>
<keyword id="KW-0269">Exonuclease</keyword>
<keyword id="KW-1035">Host cytoplasm</keyword>
<keyword id="KW-1048">Host nucleus</keyword>
<keyword id="KW-0378">Hydrolase</keyword>
<keyword id="KW-0479">Metal-binding</keyword>
<keyword id="KW-0540">Nuclease</keyword>
<keyword id="KW-0946">Virion</keyword>
<keyword id="KW-0862">Zinc</keyword>
<gene>
    <name type="ordered locus">War-144</name>
</gene>
<protein>
    <recommendedName>
        <fullName evidence="3">Probable AP endonuclease</fullName>
        <shortName evidence="3">APE</shortName>
        <ecNumber evidence="3">3.1.21.-</ecNumber>
    </recommendedName>
</protein>
<comment type="function">
    <text evidence="3 5">Endonuclease that plays a role in DNA repair (By similarity). Cleaves phosphodiester bonds on the 5' side of apurinic or apyrimidinic sites (AP sites) (By similarity). In addition to endonuclease activity, the ASFV enzyme has a proofreading 3'-5' exonuclease activity that is considerably more efficient in the elimination of a mismatch than in that of a correctly paired base (By similarity). Displays 3'-phosphatase and 3'-repair diesterase activities (By similarity). The single nucleotide gaps generated by the AP endonuclease are filled by the viral AP endonuclease and DNA ligase (Probable).</text>
</comment>
<comment type="cofactor">
    <cofactor evidence="4">
        <name>Zn(2+)</name>
        <dbReference type="ChEBI" id="CHEBI:29105"/>
    </cofactor>
    <text evidence="2">Binds 3 Zn(2+) ions.</text>
</comment>
<comment type="subcellular location">
    <subcellularLocation>
        <location evidence="3">Host nucleus</location>
    </subcellularLocation>
    <subcellularLocation>
        <location evidence="3">Host cytoplasm</location>
    </subcellularLocation>
    <subcellularLocation>
        <location evidence="3">Virion</location>
    </subcellularLocation>
    <text evidence="3">The early enzyme is localized in the nucleus and the cytoplasm, while the late protein is found only in the cytoplasm (By similarity). Found in association with viral nucleoid (By similarity).</text>
</comment>
<comment type="induction">
    <text evidence="5">Expressed in the early phase of the viral replicative cycle and accumulates at later times.</text>
</comment>
<comment type="miscellaneous">
    <text evidence="1">Consistent with its intracellular location, ASFV encodes its own replicative DNA polymerase and three base excision repair enzymes: a class II AP endonuclease, the repair polymerase Pol X, and an ATP-dependent DNA ligase.</text>
</comment>
<comment type="miscellaneous">
    <text evidence="1">During infection, the protein is expressed at early times and accumulates at later times.</text>
</comment>
<comment type="similarity">
    <text evidence="4">Belongs to the AP endonuclease 2 family.</text>
</comment>
<dbReference type="EC" id="3.1.21.-" evidence="3"/>
<dbReference type="EMBL" id="AY261366">
    <property type="status" value="NOT_ANNOTATED_CDS"/>
    <property type="molecule type" value="Genomic_DNA"/>
</dbReference>
<dbReference type="SMR" id="P0C9C7"/>
<dbReference type="Proteomes" id="UP000000858">
    <property type="component" value="Segment"/>
</dbReference>
<dbReference type="GO" id="GO:0030430">
    <property type="term" value="C:host cell cytoplasm"/>
    <property type="evidence" value="ECO:0007669"/>
    <property type="project" value="UniProtKB-SubCell"/>
</dbReference>
<dbReference type="GO" id="GO:0042025">
    <property type="term" value="C:host cell nucleus"/>
    <property type="evidence" value="ECO:0007669"/>
    <property type="project" value="UniProtKB-SubCell"/>
</dbReference>
<dbReference type="GO" id="GO:0044423">
    <property type="term" value="C:virion component"/>
    <property type="evidence" value="ECO:0007669"/>
    <property type="project" value="UniProtKB-KW"/>
</dbReference>
<dbReference type="GO" id="GO:0003677">
    <property type="term" value="F:DNA binding"/>
    <property type="evidence" value="ECO:0007669"/>
    <property type="project" value="InterPro"/>
</dbReference>
<dbReference type="GO" id="GO:0003906">
    <property type="term" value="F:DNA-(apurinic or apyrimidinic site) endonuclease activity"/>
    <property type="evidence" value="ECO:0007669"/>
    <property type="project" value="TreeGrafter"/>
</dbReference>
<dbReference type="GO" id="GO:0004519">
    <property type="term" value="F:endonuclease activity"/>
    <property type="evidence" value="ECO:0007669"/>
    <property type="project" value="UniProtKB-KW"/>
</dbReference>
<dbReference type="GO" id="GO:0004527">
    <property type="term" value="F:exonuclease activity"/>
    <property type="evidence" value="ECO:0007669"/>
    <property type="project" value="UniProtKB-KW"/>
</dbReference>
<dbReference type="GO" id="GO:0008081">
    <property type="term" value="F:phosphoric diester hydrolase activity"/>
    <property type="evidence" value="ECO:0007669"/>
    <property type="project" value="TreeGrafter"/>
</dbReference>
<dbReference type="GO" id="GO:0008270">
    <property type="term" value="F:zinc ion binding"/>
    <property type="evidence" value="ECO:0007669"/>
    <property type="project" value="InterPro"/>
</dbReference>
<dbReference type="GO" id="GO:0006284">
    <property type="term" value="P:base-excision repair"/>
    <property type="evidence" value="ECO:0007669"/>
    <property type="project" value="TreeGrafter"/>
</dbReference>
<dbReference type="CDD" id="cd00019">
    <property type="entry name" value="AP2Ec"/>
    <property type="match status" value="1"/>
</dbReference>
<dbReference type="FunFam" id="3.20.20.150:FF:000028">
    <property type="entry name" value="Probable AP endonuclease"/>
    <property type="match status" value="1"/>
</dbReference>
<dbReference type="Gene3D" id="3.20.20.150">
    <property type="entry name" value="Divalent-metal-dependent TIM barrel enzymes"/>
    <property type="match status" value="1"/>
</dbReference>
<dbReference type="InterPro" id="IPR001719">
    <property type="entry name" value="AP_endonuc_2"/>
</dbReference>
<dbReference type="InterPro" id="IPR018246">
    <property type="entry name" value="AP_endonuc_F2_Zn_BS"/>
</dbReference>
<dbReference type="InterPro" id="IPR036237">
    <property type="entry name" value="Xyl_isomerase-like_sf"/>
</dbReference>
<dbReference type="InterPro" id="IPR013022">
    <property type="entry name" value="Xyl_isomerase-like_TIM-brl"/>
</dbReference>
<dbReference type="PANTHER" id="PTHR21445:SF0">
    <property type="entry name" value="APURINIC-APYRIMIDINIC ENDONUCLEASE"/>
    <property type="match status" value="1"/>
</dbReference>
<dbReference type="PANTHER" id="PTHR21445">
    <property type="entry name" value="ENDONUCLEASE IV ENDODEOXYRIBONUCLEASE IV"/>
    <property type="match status" value="1"/>
</dbReference>
<dbReference type="Pfam" id="PF01261">
    <property type="entry name" value="AP_endonuc_2"/>
    <property type="match status" value="1"/>
</dbReference>
<dbReference type="SMART" id="SM00518">
    <property type="entry name" value="AP2Ec"/>
    <property type="match status" value="1"/>
</dbReference>
<dbReference type="SUPFAM" id="SSF51658">
    <property type="entry name" value="Xylose isomerase-like"/>
    <property type="match status" value="1"/>
</dbReference>
<dbReference type="PROSITE" id="PS00731">
    <property type="entry name" value="AP_NUCLEASE_F2_3"/>
    <property type="match status" value="1"/>
</dbReference>
<dbReference type="PROSITE" id="PS51432">
    <property type="entry name" value="AP_NUCLEASE_F2_4"/>
    <property type="match status" value="1"/>
</dbReference>